<name>EXPB6_ORYSJ</name>
<proteinExistence type="evidence at transcript level"/>
<accession>Q7XCA7</accession>
<accession>B7E6G9</accession>
<accession>Q9LD08</accession>
<organism>
    <name type="scientific">Oryza sativa subsp. japonica</name>
    <name type="common">Rice</name>
    <dbReference type="NCBI Taxonomy" id="39947"/>
    <lineage>
        <taxon>Eukaryota</taxon>
        <taxon>Viridiplantae</taxon>
        <taxon>Streptophyta</taxon>
        <taxon>Embryophyta</taxon>
        <taxon>Tracheophyta</taxon>
        <taxon>Spermatophyta</taxon>
        <taxon>Magnoliopsida</taxon>
        <taxon>Liliopsida</taxon>
        <taxon>Poales</taxon>
        <taxon>Poaceae</taxon>
        <taxon>BOP clade</taxon>
        <taxon>Oryzoideae</taxon>
        <taxon>Oryzeae</taxon>
        <taxon>Oryzinae</taxon>
        <taxon>Oryza</taxon>
        <taxon>Oryza sativa</taxon>
    </lineage>
</organism>
<reference key="1">
    <citation type="journal article" date="1997" name="Proc. Natl. Acad. Sci. U.S.A.">
        <title>Group I allergens of grass pollen as cell wall-loosening agents.</title>
        <authorList>
            <person name="Cosgrove D.J."/>
            <person name="Bedinger P.A."/>
            <person name="Durachko D.M."/>
        </authorList>
    </citation>
    <scope>NUCLEOTIDE SEQUENCE [MRNA]</scope>
</reference>
<reference key="2">
    <citation type="journal article" date="2003" name="Science">
        <title>In-depth view of structure, activity, and evolution of rice chromosome 10.</title>
        <authorList>
            <person name="Yu Y."/>
            <person name="Rambo T."/>
            <person name="Currie J."/>
            <person name="Saski C."/>
            <person name="Kim H.-R."/>
            <person name="Collura K."/>
            <person name="Thompson S."/>
            <person name="Simmons J."/>
            <person name="Yang T.-J."/>
            <person name="Nah G."/>
            <person name="Patel A.J."/>
            <person name="Thurmond S."/>
            <person name="Henry D."/>
            <person name="Oates R."/>
            <person name="Palmer M."/>
            <person name="Pries G."/>
            <person name="Gibson J."/>
            <person name="Anderson H."/>
            <person name="Paradkar M."/>
            <person name="Crane L."/>
            <person name="Dale J."/>
            <person name="Carver M.B."/>
            <person name="Wood T."/>
            <person name="Frisch D."/>
            <person name="Engler F."/>
            <person name="Soderlund C."/>
            <person name="Palmer L.E."/>
            <person name="Teytelman L."/>
            <person name="Nascimento L."/>
            <person name="De la Bastide M."/>
            <person name="Spiegel L."/>
            <person name="Ware D."/>
            <person name="O'Shaughnessy A."/>
            <person name="Dike S."/>
            <person name="Dedhia N."/>
            <person name="Preston R."/>
            <person name="Huang E."/>
            <person name="Ferraro K."/>
            <person name="Kuit K."/>
            <person name="Miller B."/>
            <person name="Zutavern T."/>
            <person name="Katzenberger F."/>
            <person name="Muller S."/>
            <person name="Balija V."/>
            <person name="Martienssen R.A."/>
            <person name="Stein L."/>
            <person name="Minx P."/>
            <person name="Johnson D."/>
            <person name="Cordum H."/>
            <person name="Mardis E."/>
            <person name="Cheng Z."/>
            <person name="Jiang J."/>
            <person name="Wilson R."/>
            <person name="McCombie W.R."/>
            <person name="Wing R.A."/>
            <person name="Yuan Q."/>
            <person name="Ouyang S."/>
            <person name="Liu J."/>
            <person name="Jones K.M."/>
            <person name="Gansberger K."/>
            <person name="Moffat K."/>
            <person name="Hill J."/>
            <person name="Tsitrin T."/>
            <person name="Overton L."/>
            <person name="Bera J."/>
            <person name="Kim M."/>
            <person name="Jin S."/>
            <person name="Tallon L."/>
            <person name="Ciecko A."/>
            <person name="Pai G."/>
            <person name="Van Aken S."/>
            <person name="Utterback T."/>
            <person name="Reidmuller S."/>
            <person name="Bormann J."/>
            <person name="Feldblyum T."/>
            <person name="Hsiao J."/>
            <person name="Zismann V."/>
            <person name="Blunt S."/>
            <person name="de Vazeille A.R."/>
            <person name="Shaffer T."/>
            <person name="Koo H."/>
            <person name="Suh B."/>
            <person name="Yang Q."/>
            <person name="Haas B."/>
            <person name="Peterson J."/>
            <person name="Pertea M."/>
            <person name="Volfovsky N."/>
            <person name="Wortman J."/>
            <person name="White O."/>
            <person name="Salzberg S.L."/>
            <person name="Fraser C.M."/>
            <person name="Buell C.R."/>
            <person name="Messing J."/>
            <person name="Song R."/>
            <person name="Fuks G."/>
            <person name="Llaca V."/>
            <person name="Kovchak S."/>
            <person name="Young S."/>
            <person name="Bowers J.E."/>
            <person name="Paterson A.H."/>
            <person name="Johns M.A."/>
            <person name="Mao L."/>
            <person name="Pan H."/>
            <person name="Dean R.A."/>
        </authorList>
    </citation>
    <scope>NUCLEOTIDE SEQUENCE [LARGE SCALE GENOMIC DNA]</scope>
    <source>
        <strain>cv. Nipponbare</strain>
    </source>
</reference>
<reference key="3">
    <citation type="journal article" date="2005" name="Nature">
        <title>The map-based sequence of the rice genome.</title>
        <authorList>
            <consortium name="International rice genome sequencing project (IRGSP)"/>
        </authorList>
    </citation>
    <scope>NUCLEOTIDE SEQUENCE [LARGE SCALE GENOMIC DNA]</scope>
    <source>
        <strain>cv. Nipponbare</strain>
    </source>
</reference>
<reference key="4">
    <citation type="journal article" date="2008" name="Nucleic Acids Res.">
        <title>The rice annotation project database (RAP-DB): 2008 update.</title>
        <authorList>
            <consortium name="The rice annotation project (RAP)"/>
        </authorList>
    </citation>
    <scope>GENOME REANNOTATION</scope>
    <source>
        <strain>cv. Nipponbare</strain>
    </source>
</reference>
<reference key="5">
    <citation type="journal article" date="2013" name="Rice">
        <title>Improvement of the Oryza sativa Nipponbare reference genome using next generation sequence and optical map data.</title>
        <authorList>
            <person name="Kawahara Y."/>
            <person name="de la Bastide M."/>
            <person name="Hamilton J.P."/>
            <person name="Kanamori H."/>
            <person name="McCombie W.R."/>
            <person name="Ouyang S."/>
            <person name="Schwartz D.C."/>
            <person name="Tanaka T."/>
            <person name="Wu J."/>
            <person name="Zhou S."/>
            <person name="Childs K.L."/>
            <person name="Davidson R.M."/>
            <person name="Lin H."/>
            <person name="Quesada-Ocampo L."/>
            <person name="Vaillancourt B."/>
            <person name="Sakai H."/>
            <person name="Lee S.S."/>
            <person name="Kim J."/>
            <person name="Numa H."/>
            <person name="Itoh T."/>
            <person name="Buell C.R."/>
            <person name="Matsumoto T."/>
        </authorList>
    </citation>
    <scope>GENOME REANNOTATION</scope>
    <source>
        <strain>cv. Nipponbare</strain>
    </source>
</reference>
<reference key="6">
    <citation type="journal article" date="2003" name="Science">
        <title>Collection, mapping, and annotation of over 28,000 cDNA clones from japonica rice.</title>
        <authorList>
            <consortium name="The rice full-length cDNA consortium"/>
        </authorList>
    </citation>
    <scope>NUCLEOTIDE SEQUENCE [LARGE SCALE MRNA]</scope>
    <source>
        <strain>cv. Nipponbare</strain>
    </source>
</reference>
<reference key="7">
    <citation type="journal article" date="2001" name="Plant Physiol.">
        <title>Expression of beta-expansins is correlated with internodal elongation in deepwater rice.</title>
        <authorList>
            <person name="Lee Y."/>
            <person name="Kende H."/>
        </authorList>
    </citation>
    <scope>TISSUE SPECIFICITY</scope>
    <scope>INDUCTION</scope>
</reference>
<reference key="8">
    <citation type="journal article" date="2002" name="Plant Physiol.">
        <title>Expression of alpha-expansin and expansin-like genes in deepwater rice.</title>
        <authorList>
            <person name="Lee Y."/>
            <person name="Kende H."/>
        </authorList>
    </citation>
    <scope>DEVELOPMENTAL STAGE</scope>
</reference>
<reference key="9">
    <citation type="journal article" date="2004" name="Plant Mol. Biol.">
        <title>Nomenclature for members of the expansin superfamily of genes and proteins.</title>
        <authorList>
            <person name="Kende H."/>
            <person name="Bradford K.J."/>
            <person name="Brummell D.A."/>
            <person name="Cho H.-T."/>
            <person name="Cosgrove D.J."/>
            <person name="Fleming A.J."/>
            <person name="Gehring C."/>
            <person name="Lee Y."/>
            <person name="McQueen-Mason S.J."/>
            <person name="Rose J.K.C."/>
            <person name="Voesenek L.A.C."/>
        </authorList>
    </citation>
    <scope>NOMENCLATURE</scope>
</reference>
<dbReference type="EMBL" id="AF261274">
    <property type="protein sequence ID" value="AAF72987.1"/>
    <property type="molecule type" value="mRNA"/>
</dbReference>
<dbReference type="EMBL" id="AC037426">
    <property type="protein sequence ID" value="AAK15442.1"/>
    <property type="molecule type" value="Genomic_DNA"/>
</dbReference>
<dbReference type="EMBL" id="DP000086">
    <property type="protein sequence ID" value="AAP54967.1"/>
    <property type="molecule type" value="Genomic_DNA"/>
</dbReference>
<dbReference type="EMBL" id="AP008216">
    <property type="protein sequence ID" value="BAF27186.1"/>
    <property type="molecule type" value="Genomic_DNA"/>
</dbReference>
<dbReference type="EMBL" id="AP014966">
    <property type="protein sequence ID" value="BAT11992.1"/>
    <property type="molecule type" value="Genomic_DNA"/>
</dbReference>
<dbReference type="EMBL" id="AK061498">
    <property type="protein sequence ID" value="BAG87966.1"/>
    <property type="molecule type" value="mRNA"/>
</dbReference>
<dbReference type="EMBL" id="AK104197">
    <property type="protein sequence ID" value="BAG96496.1"/>
    <property type="molecule type" value="mRNA"/>
</dbReference>
<dbReference type="EMBL" id="AK105799">
    <property type="protein sequence ID" value="BAG97372.1"/>
    <property type="molecule type" value="mRNA"/>
</dbReference>
<dbReference type="RefSeq" id="XP_015614019.1">
    <property type="nucleotide sequence ID" value="XM_015758533.1"/>
</dbReference>
<dbReference type="SMR" id="Q7XCA7"/>
<dbReference type="FunCoup" id="Q7XCA7">
    <property type="interactions" value="9"/>
</dbReference>
<dbReference type="STRING" id="39947.Q7XCA7"/>
<dbReference type="GlyCosmos" id="Q7XCA7">
    <property type="glycosylation" value="1 site, No reported glycans"/>
</dbReference>
<dbReference type="PaxDb" id="39947-Q7XCA7"/>
<dbReference type="EnsemblPlants" id="Os10t0555600-01">
    <property type="protein sequence ID" value="Os10t0555600-01"/>
    <property type="gene ID" value="Os10g0555600"/>
</dbReference>
<dbReference type="Gramene" id="Os10t0555600-01">
    <property type="protein sequence ID" value="Os10t0555600-01"/>
    <property type="gene ID" value="Os10g0555600"/>
</dbReference>
<dbReference type="KEGG" id="dosa:Os10g0555600"/>
<dbReference type="eggNOG" id="ENOG502QRTE">
    <property type="taxonomic scope" value="Eukaryota"/>
</dbReference>
<dbReference type="HOGENOM" id="CLU_027462_1_0_1"/>
<dbReference type="InParanoid" id="Q7XCA7"/>
<dbReference type="OMA" id="SCVAGQE"/>
<dbReference type="OrthoDB" id="595323at2759"/>
<dbReference type="Proteomes" id="UP000000763">
    <property type="component" value="Chromosome 10"/>
</dbReference>
<dbReference type="Proteomes" id="UP000059680">
    <property type="component" value="Chromosome 10"/>
</dbReference>
<dbReference type="GO" id="GO:0005576">
    <property type="term" value="C:extracellular region"/>
    <property type="evidence" value="ECO:0007669"/>
    <property type="project" value="UniProtKB-KW"/>
</dbReference>
<dbReference type="GO" id="GO:0016020">
    <property type="term" value="C:membrane"/>
    <property type="evidence" value="ECO:0007669"/>
    <property type="project" value="UniProtKB-SubCell"/>
</dbReference>
<dbReference type="GO" id="GO:0009828">
    <property type="term" value="P:plant-type cell wall loosening"/>
    <property type="evidence" value="ECO:0000250"/>
    <property type="project" value="UniProtKB"/>
</dbReference>
<dbReference type="GO" id="GO:0019953">
    <property type="term" value="P:sexual reproduction"/>
    <property type="evidence" value="ECO:0007669"/>
    <property type="project" value="InterPro"/>
</dbReference>
<dbReference type="CDD" id="cd22275">
    <property type="entry name" value="DPBB_EXPB_N"/>
    <property type="match status" value="1"/>
</dbReference>
<dbReference type="Gene3D" id="2.60.40.760">
    <property type="entry name" value="Expansin, cellulose-binding-like domain"/>
    <property type="match status" value="1"/>
</dbReference>
<dbReference type="Gene3D" id="2.40.40.10">
    <property type="entry name" value="RlpA-like domain"/>
    <property type="match status" value="1"/>
</dbReference>
<dbReference type="InterPro" id="IPR007118">
    <property type="entry name" value="Expan_Lol_pI"/>
</dbReference>
<dbReference type="InterPro" id="IPR007112">
    <property type="entry name" value="Expansin/allergen_DPBB_dom"/>
</dbReference>
<dbReference type="InterPro" id="IPR007117">
    <property type="entry name" value="Expansin_CBD"/>
</dbReference>
<dbReference type="InterPro" id="IPR036749">
    <property type="entry name" value="Expansin_CBD_sf"/>
</dbReference>
<dbReference type="InterPro" id="IPR005795">
    <property type="entry name" value="LolPI"/>
</dbReference>
<dbReference type="InterPro" id="IPR009009">
    <property type="entry name" value="RlpA-like_DPBB"/>
</dbReference>
<dbReference type="InterPro" id="IPR036908">
    <property type="entry name" value="RlpA-like_sf"/>
</dbReference>
<dbReference type="PANTHER" id="PTHR31692">
    <property type="entry name" value="EXPANSIN-B3"/>
    <property type="match status" value="1"/>
</dbReference>
<dbReference type="PANTHER" id="PTHR31692:SF12">
    <property type="entry name" value="EXPANSIN-B6"/>
    <property type="match status" value="1"/>
</dbReference>
<dbReference type="Pfam" id="PF03330">
    <property type="entry name" value="DPBB_1"/>
    <property type="match status" value="1"/>
</dbReference>
<dbReference type="Pfam" id="PF01357">
    <property type="entry name" value="Expansin_C"/>
    <property type="match status" value="1"/>
</dbReference>
<dbReference type="PRINTS" id="PR01225">
    <property type="entry name" value="EXPANSNFAMLY"/>
</dbReference>
<dbReference type="PRINTS" id="PR00829">
    <property type="entry name" value="LOLP1ALLERGN"/>
</dbReference>
<dbReference type="SMART" id="SM00837">
    <property type="entry name" value="DPBB_1"/>
    <property type="match status" value="1"/>
</dbReference>
<dbReference type="SUPFAM" id="SSF50685">
    <property type="entry name" value="Barwin-like endoglucanases"/>
    <property type="match status" value="1"/>
</dbReference>
<dbReference type="SUPFAM" id="SSF49590">
    <property type="entry name" value="PHL pollen allergen"/>
    <property type="match status" value="1"/>
</dbReference>
<dbReference type="PROSITE" id="PS50843">
    <property type="entry name" value="EXPANSIN_CBD"/>
    <property type="match status" value="1"/>
</dbReference>
<dbReference type="PROSITE" id="PS50842">
    <property type="entry name" value="EXPANSIN_EG45"/>
    <property type="match status" value="1"/>
</dbReference>
<comment type="function">
    <text evidence="1">May cause loosening and extension of plant cell walls by disrupting non-covalent bonding between cellulose microfibrils and matrix glucans. No enzymatic activity has been found. May be required for rapid internodal elongation in deepwater rice during submergence (By similarity).</text>
</comment>
<comment type="subcellular location">
    <subcellularLocation>
        <location evidence="1">Secreted</location>
        <location evidence="1">Cell wall</location>
    </subcellularLocation>
    <subcellularLocation>
        <location evidence="1">Membrane</location>
        <topology evidence="1">Peripheral membrane protein</topology>
    </subcellularLocation>
</comment>
<comment type="tissue specificity">
    <text evidence="5">Expressed in internodes.</text>
</comment>
<comment type="developmental stage">
    <text evidence="6">Expressed in the growing regions of roots, coleoptiles, and internodes.</text>
</comment>
<comment type="induction">
    <text evidence="5">By gibberellin (GA3) and wounding.</text>
</comment>
<comment type="similarity">
    <text evidence="7">Belongs to the expansin family. Expansin B subfamily.</text>
</comment>
<comment type="online information" name="EXPANSIN homepage">
    <link uri="https://www.dept.psu.edu/biology/groups/expansins/index.htm"/>
</comment>
<sequence length="275" mass="29884">MAARMGSKVAAILAILSVLVVHGSCKGHPVNYNVSDASAYGSGWLPARATWYGAPTGAGPDDNGGACGFKNVNQYPFSSMTSCGNEPIFKDGKGCGSCYQIRCNKDPSCSGNIETVIITDMNYYPVARYHFDLSGTAFGAMAKPGLNDKLRHSGIIDIQFRRVPCNYPGLKINFHVEEGSNPVYFAVLVEYEDLDGDVVQVDLMESKSAYGGATGVWTPMRESWGSIWRLDSNHRLQAPFSLRIRSDSGKTLVANNVIPANWSPNSNYRSIVQFS</sequence>
<gene>
    <name type="primary">EXPB6</name>
    <name type="ordered locus">Os10g0555600</name>
    <name type="ordered locus">LOC_Os10g40700</name>
    <name type="ORF">OSJNBb0014I11.3</name>
</gene>
<evidence type="ECO:0000250" key="1"/>
<evidence type="ECO:0000255" key="2"/>
<evidence type="ECO:0000255" key="3">
    <source>
        <dbReference type="PROSITE-ProRule" id="PRU00078"/>
    </source>
</evidence>
<evidence type="ECO:0000255" key="4">
    <source>
        <dbReference type="PROSITE-ProRule" id="PRU00079"/>
    </source>
</evidence>
<evidence type="ECO:0000269" key="5">
    <source>
    </source>
</evidence>
<evidence type="ECO:0000269" key="6">
    <source>
    </source>
</evidence>
<evidence type="ECO:0000305" key="7"/>
<keyword id="KW-0134">Cell wall</keyword>
<keyword id="KW-0961">Cell wall biogenesis/degradation</keyword>
<keyword id="KW-1015">Disulfide bond</keyword>
<keyword id="KW-0325">Glycoprotein</keyword>
<keyword id="KW-0472">Membrane</keyword>
<keyword id="KW-1185">Reference proteome</keyword>
<keyword id="KW-0964">Secreted</keyword>
<keyword id="KW-0732">Signal</keyword>
<feature type="signal peptide" evidence="2">
    <location>
        <begin position="1"/>
        <end position="25"/>
    </location>
</feature>
<feature type="chain" id="PRO_0000252017" description="Expansin-B6">
    <location>
        <begin position="26"/>
        <end position="275"/>
    </location>
</feature>
<feature type="domain" description="Expansin-like EG45" evidence="4">
    <location>
        <begin position="64"/>
        <end position="170"/>
    </location>
</feature>
<feature type="domain" description="Expansin-like CBD" evidence="3">
    <location>
        <begin position="183"/>
        <end position="270"/>
    </location>
</feature>
<feature type="glycosylation site" description="N-linked (GlcNAc...) asparagine" evidence="2">
    <location>
        <position position="33"/>
    </location>
</feature>
<feature type="disulfide bond" evidence="4">
    <location>
        <begin position="67"/>
        <end position="95"/>
    </location>
</feature>
<feature type="disulfide bond" evidence="4">
    <location>
        <begin position="98"/>
        <end position="165"/>
    </location>
</feature>
<feature type="disulfide bond" evidence="4">
    <location>
        <begin position="103"/>
        <end position="109"/>
    </location>
</feature>
<protein>
    <recommendedName>
        <fullName>Expansin-B6</fullName>
    </recommendedName>
    <alternativeName>
        <fullName>Beta-expansin-6</fullName>
    </alternativeName>
    <alternativeName>
        <fullName>OsEXPB6</fullName>
    </alternativeName>
    <alternativeName>
        <fullName>OsaEXPb1.8</fullName>
    </alternativeName>
</protein>